<gene>
    <name evidence="1" type="primary">sbmC</name>
    <name type="synonym">gyrI</name>
    <name type="ordered locus">YE2070</name>
</gene>
<accession>A1JN27</accession>
<proteinExistence type="inferred from homology"/>
<keyword id="KW-0963">Cytoplasm</keyword>
<keyword id="KW-0346">Stress response</keyword>
<comment type="function">
    <text evidence="1">Inhibits the supercoiling activity of DNA gyrase. Acts by inhibiting DNA gyrase at an early step, prior to (or at the step of) binding of DNA by the gyrase. It protects cells against toxins that target DNA gyrase, by inhibiting activity of these toxins and reducing the formation of lethal double-strand breaks in the cell.</text>
</comment>
<comment type="subunit">
    <text evidence="1">Interacts with DNA gyrase.</text>
</comment>
<comment type="subcellular location">
    <subcellularLocation>
        <location evidence="1">Cytoplasm</location>
    </subcellularLocation>
</comment>
<comment type="similarity">
    <text evidence="1">Belongs to the DNA gyrase inhibitor family.</text>
</comment>
<feature type="chain" id="PRO_0000409708" description="DNA gyrase inhibitor">
    <location>
        <begin position="1"/>
        <end position="157"/>
    </location>
</feature>
<reference key="1">
    <citation type="journal article" date="2006" name="PLoS Genet.">
        <title>The complete genome sequence and comparative genome analysis of the high pathogenicity Yersinia enterocolitica strain 8081.</title>
        <authorList>
            <person name="Thomson N.R."/>
            <person name="Howard S."/>
            <person name="Wren B.W."/>
            <person name="Holden M.T.G."/>
            <person name="Crossman L."/>
            <person name="Challis G.L."/>
            <person name="Churcher C."/>
            <person name="Mungall K."/>
            <person name="Brooks K."/>
            <person name="Chillingworth T."/>
            <person name="Feltwell T."/>
            <person name="Abdellah Z."/>
            <person name="Hauser H."/>
            <person name="Jagels K."/>
            <person name="Maddison M."/>
            <person name="Moule S."/>
            <person name="Sanders M."/>
            <person name="Whitehead S."/>
            <person name="Quail M.A."/>
            <person name="Dougan G."/>
            <person name="Parkhill J."/>
            <person name="Prentice M.B."/>
        </authorList>
    </citation>
    <scope>NUCLEOTIDE SEQUENCE [LARGE SCALE GENOMIC DNA]</scope>
    <source>
        <strain>NCTC 13174 / 8081</strain>
    </source>
</reference>
<name>SBMC_YERE8</name>
<sequence length="157" mass="17989">MAFKIIEKQPQQIVSIRVVGPYHETIPKGFDQLSSLYTQYQIPGKDWLVLYWDNPETNPPAELRADVSLSVADDYVLPPELSDHLQLQVIPAGLYAVYHTRVSDDDYAKAWGELYNQHLPQSGYRPTEGACYEVYLNDGRADGYFDIDIYQSVEKDQ</sequence>
<organism>
    <name type="scientific">Yersinia enterocolitica serotype O:8 / biotype 1B (strain NCTC 13174 / 8081)</name>
    <dbReference type="NCBI Taxonomy" id="393305"/>
    <lineage>
        <taxon>Bacteria</taxon>
        <taxon>Pseudomonadati</taxon>
        <taxon>Pseudomonadota</taxon>
        <taxon>Gammaproteobacteria</taxon>
        <taxon>Enterobacterales</taxon>
        <taxon>Yersiniaceae</taxon>
        <taxon>Yersinia</taxon>
    </lineage>
</organism>
<protein>
    <recommendedName>
        <fullName evidence="1">DNA gyrase inhibitor</fullName>
    </recommendedName>
</protein>
<evidence type="ECO:0000255" key="1">
    <source>
        <dbReference type="HAMAP-Rule" id="MF_01896"/>
    </source>
</evidence>
<dbReference type="EMBL" id="AM286415">
    <property type="protein sequence ID" value="CAL12144.1"/>
    <property type="molecule type" value="Genomic_DNA"/>
</dbReference>
<dbReference type="RefSeq" id="WP_011816334.1">
    <property type="nucleotide sequence ID" value="NC_008800.1"/>
</dbReference>
<dbReference type="RefSeq" id="YP_001006315.1">
    <property type="nucleotide sequence ID" value="NC_008800.1"/>
</dbReference>
<dbReference type="SMR" id="A1JN27"/>
<dbReference type="KEGG" id="yen:YE2070"/>
<dbReference type="PATRIC" id="fig|393305.7.peg.2235"/>
<dbReference type="eggNOG" id="COG3449">
    <property type="taxonomic scope" value="Bacteria"/>
</dbReference>
<dbReference type="HOGENOM" id="CLU_113664_3_2_6"/>
<dbReference type="OrthoDB" id="282744at2"/>
<dbReference type="Proteomes" id="UP000000642">
    <property type="component" value="Chromosome"/>
</dbReference>
<dbReference type="GO" id="GO:0005737">
    <property type="term" value="C:cytoplasm"/>
    <property type="evidence" value="ECO:0007669"/>
    <property type="project" value="UniProtKB-SubCell"/>
</dbReference>
<dbReference type="GO" id="GO:0008657">
    <property type="term" value="F:DNA topoisomerase type II (double strand cut, ATP-hydrolyzing) inhibitor activity"/>
    <property type="evidence" value="ECO:0007669"/>
    <property type="project" value="UniProtKB-UniRule"/>
</dbReference>
<dbReference type="Gene3D" id="3.20.80.10">
    <property type="entry name" value="Regulatory factor, effector binding domain"/>
    <property type="match status" value="1"/>
</dbReference>
<dbReference type="HAMAP" id="MF_01896">
    <property type="entry name" value="DNA_gyrase_inhibitor"/>
    <property type="match status" value="1"/>
</dbReference>
<dbReference type="InterPro" id="IPR010499">
    <property type="entry name" value="AraC_E-bd"/>
</dbReference>
<dbReference type="InterPro" id="IPR050908">
    <property type="entry name" value="DNA_gyrase_inhibitor"/>
</dbReference>
<dbReference type="InterPro" id="IPR024911">
    <property type="entry name" value="DNA_gyrase_inhibitor_GyrI"/>
</dbReference>
<dbReference type="InterPro" id="IPR029442">
    <property type="entry name" value="GyrI-like"/>
</dbReference>
<dbReference type="InterPro" id="IPR011256">
    <property type="entry name" value="Reg_factor_effector_dom_sf"/>
</dbReference>
<dbReference type="NCBIfam" id="NF007451">
    <property type="entry name" value="PRK10016.1"/>
    <property type="match status" value="1"/>
</dbReference>
<dbReference type="PANTHER" id="PTHR40055:SF2">
    <property type="entry name" value="DNA GYRASE INHIBITOR"/>
    <property type="match status" value="1"/>
</dbReference>
<dbReference type="PANTHER" id="PTHR40055">
    <property type="entry name" value="TRANSCRIPTIONAL REGULATOR YGIV-RELATED"/>
    <property type="match status" value="1"/>
</dbReference>
<dbReference type="Pfam" id="PF06445">
    <property type="entry name" value="GyrI-like"/>
    <property type="match status" value="1"/>
</dbReference>
<dbReference type="SMART" id="SM00871">
    <property type="entry name" value="AraC_E_bind"/>
    <property type="match status" value="1"/>
</dbReference>
<dbReference type="SUPFAM" id="SSF55136">
    <property type="entry name" value="Probable bacterial effector-binding domain"/>
    <property type="match status" value="1"/>
</dbReference>